<keyword id="KW-0997">Cell inner membrane</keyword>
<keyword id="KW-1003">Cell membrane</keyword>
<keyword id="KW-0350">Heme biosynthesis</keyword>
<keyword id="KW-0472">Membrane</keyword>
<keyword id="KW-0808">Transferase</keyword>
<keyword id="KW-0812">Transmembrane</keyword>
<keyword id="KW-1133">Transmembrane helix</keyword>
<accession>Q1BTD0</accession>
<proteinExistence type="inferred from homology"/>
<comment type="function">
    <text evidence="1">Converts heme B (protoheme IX) to heme O by substitution of the vinyl group on carbon 2 of heme B porphyrin ring with a hydroxyethyl farnesyl side group.</text>
</comment>
<comment type="catalytic activity">
    <reaction evidence="1">
        <text>heme b + (2E,6E)-farnesyl diphosphate + H2O = Fe(II)-heme o + diphosphate</text>
        <dbReference type="Rhea" id="RHEA:28070"/>
        <dbReference type="ChEBI" id="CHEBI:15377"/>
        <dbReference type="ChEBI" id="CHEBI:33019"/>
        <dbReference type="ChEBI" id="CHEBI:60344"/>
        <dbReference type="ChEBI" id="CHEBI:60530"/>
        <dbReference type="ChEBI" id="CHEBI:175763"/>
        <dbReference type="EC" id="2.5.1.141"/>
    </reaction>
</comment>
<comment type="pathway">
    <text evidence="1">Porphyrin-containing compound metabolism; heme O biosynthesis; heme O from protoheme: step 1/1.</text>
</comment>
<comment type="subcellular location">
    <subcellularLocation>
        <location evidence="1">Cell inner membrane</location>
        <topology evidence="1">Multi-pass membrane protein</topology>
    </subcellularLocation>
</comment>
<comment type="miscellaneous">
    <text evidence="1">Carbon 2 of the heme B porphyrin ring is defined according to the Fischer nomenclature.</text>
</comment>
<comment type="similarity">
    <text evidence="1">Belongs to the UbiA prenyltransferase family. Protoheme IX farnesyltransferase subfamily.</text>
</comment>
<gene>
    <name evidence="1" type="primary">ctaB</name>
    <name type="ordered locus">Bcen_2224</name>
</gene>
<dbReference type="EC" id="2.5.1.141" evidence="1"/>
<dbReference type="EMBL" id="CP000378">
    <property type="protein sequence ID" value="ABF77125.1"/>
    <property type="molecule type" value="Genomic_DNA"/>
</dbReference>
<dbReference type="SMR" id="Q1BTD0"/>
<dbReference type="HOGENOM" id="CLU_029631_0_2_4"/>
<dbReference type="UniPathway" id="UPA00834">
    <property type="reaction ID" value="UER00712"/>
</dbReference>
<dbReference type="GO" id="GO:0005886">
    <property type="term" value="C:plasma membrane"/>
    <property type="evidence" value="ECO:0007669"/>
    <property type="project" value="UniProtKB-SubCell"/>
</dbReference>
<dbReference type="GO" id="GO:0008495">
    <property type="term" value="F:protoheme IX farnesyltransferase activity"/>
    <property type="evidence" value="ECO:0007669"/>
    <property type="project" value="UniProtKB-UniRule"/>
</dbReference>
<dbReference type="GO" id="GO:0048034">
    <property type="term" value="P:heme O biosynthetic process"/>
    <property type="evidence" value="ECO:0007669"/>
    <property type="project" value="UniProtKB-UniRule"/>
</dbReference>
<dbReference type="CDD" id="cd13957">
    <property type="entry name" value="PT_UbiA_Cox10"/>
    <property type="match status" value="1"/>
</dbReference>
<dbReference type="Gene3D" id="1.10.357.140">
    <property type="entry name" value="UbiA prenyltransferase"/>
    <property type="match status" value="1"/>
</dbReference>
<dbReference type="HAMAP" id="MF_00154">
    <property type="entry name" value="CyoE_CtaB"/>
    <property type="match status" value="1"/>
</dbReference>
<dbReference type="InterPro" id="IPR006369">
    <property type="entry name" value="Protohaem_IX_farnesylTrfase"/>
</dbReference>
<dbReference type="InterPro" id="IPR000537">
    <property type="entry name" value="UbiA_prenyltransferase"/>
</dbReference>
<dbReference type="InterPro" id="IPR030470">
    <property type="entry name" value="UbiA_prenylTrfase_CS"/>
</dbReference>
<dbReference type="InterPro" id="IPR044878">
    <property type="entry name" value="UbiA_sf"/>
</dbReference>
<dbReference type="NCBIfam" id="TIGR01473">
    <property type="entry name" value="cyoE_ctaB"/>
    <property type="match status" value="1"/>
</dbReference>
<dbReference type="NCBIfam" id="NF003349">
    <property type="entry name" value="PRK04375.1-2"/>
    <property type="match status" value="1"/>
</dbReference>
<dbReference type="PANTHER" id="PTHR43448:SF7">
    <property type="entry name" value="4-HYDROXYBENZOATE SOLANESYLTRANSFERASE"/>
    <property type="match status" value="1"/>
</dbReference>
<dbReference type="PANTHER" id="PTHR43448">
    <property type="entry name" value="PROTOHEME IX FARNESYLTRANSFERASE, MITOCHONDRIAL"/>
    <property type="match status" value="1"/>
</dbReference>
<dbReference type="Pfam" id="PF01040">
    <property type="entry name" value="UbiA"/>
    <property type="match status" value="1"/>
</dbReference>
<dbReference type="PROSITE" id="PS00943">
    <property type="entry name" value="UBIA"/>
    <property type="match status" value="1"/>
</dbReference>
<evidence type="ECO:0000255" key="1">
    <source>
        <dbReference type="HAMAP-Rule" id="MF_00154"/>
    </source>
</evidence>
<feature type="chain" id="PRO_0000327021" description="Protoheme IX farnesyltransferase">
    <location>
        <begin position="1"/>
        <end position="300"/>
    </location>
</feature>
<feature type="transmembrane region" description="Helical" evidence="1">
    <location>
        <begin position="24"/>
        <end position="44"/>
    </location>
</feature>
<feature type="transmembrane region" description="Helical" evidence="1">
    <location>
        <begin position="46"/>
        <end position="66"/>
    </location>
</feature>
<feature type="transmembrane region" description="Helical" evidence="1">
    <location>
        <begin position="94"/>
        <end position="114"/>
    </location>
</feature>
<feature type="transmembrane region" description="Helical" evidence="1">
    <location>
        <begin position="118"/>
        <end position="138"/>
    </location>
</feature>
<feature type="transmembrane region" description="Helical" evidence="1">
    <location>
        <begin position="146"/>
        <end position="166"/>
    </location>
</feature>
<feature type="transmembrane region" description="Helical" evidence="1">
    <location>
        <begin position="172"/>
        <end position="192"/>
    </location>
</feature>
<feature type="transmembrane region" description="Helical" evidence="1">
    <location>
        <begin position="217"/>
        <end position="237"/>
    </location>
</feature>
<feature type="transmembrane region" description="Helical" evidence="1">
    <location>
        <begin position="239"/>
        <end position="259"/>
    </location>
</feature>
<feature type="transmembrane region" description="Helical" evidence="1">
    <location>
        <begin position="278"/>
        <end position="298"/>
    </location>
</feature>
<name>COXX_BURO1</name>
<reference key="1">
    <citation type="submission" date="2006-05" db="EMBL/GenBank/DDBJ databases">
        <title>Complete sequence of chromosome 1 of Burkholderia cenocepacia AU 1054.</title>
        <authorList>
            <consortium name="US DOE Joint Genome Institute"/>
            <person name="Copeland A."/>
            <person name="Lucas S."/>
            <person name="Lapidus A."/>
            <person name="Barry K."/>
            <person name="Detter J.C."/>
            <person name="Glavina del Rio T."/>
            <person name="Hammon N."/>
            <person name="Israni S."/>
            <person name="Dalin E."/>
            <person name="Tice H."/>
            <person name="Pitluck S."/>
            <person name="Chain P."/>
            <person name="Malfatti S."/>
            <person name="Shin M."/>
            <person name="Vergez L."/>
            <person name="Schmutz J."/>
            <person name="Larimer F."/>
            <person name="Land M."/>
            <person name="Hauser L."/>
            <person name="Kyrpides N."/>
            <person name="Lykidis A."/>
            <person name="LiPuma J.J."/>
            <person name="Konstantinidis K."/>
            <person name="Tiedje J.M."/>
            <person name="Richardson P."/>
        </authorList>
    </citation>
    <scope>NUCLEOTIDE SEQUENCE [LARGE SCALE GENOMIC DNA]</scope>
    <source>
        <strain>AU 1054</strain>
    </source>
</reference>
<sequence>MQSTLSQSPGSRFSQYMALTKPRVTQLAVFCAVIGMFLATPGMVPWHVLIGGTVGIWLLAGAAFAINCLVEQKIDAMMRRTAWRPSARGEITTPQILLFSAVLGSVGAWTLYTFTNPLTMWLTIATFVGYAVIYTLLLKPMTPQNIVIGGASGAMPPALGWAAVTGAVPGDAWILVLIIFVWTPPHFWVLALYRRKDYENAGLPMLPVTHGEKFTRLHILLYTVILFAVTLMPFISGMSGAVYLTSAVLLGAVFLAYAWKIHRDYSDELARKAFRYSIVYLSLLFAALLVDHYARPLLGV</sequence>
<protein>
    <recommendedName>
        <fullName evidence="1">Protoheme IX farnesyltransferase</fullName>
        <ecNumber evidence="1">2.5.1.141</ecNumber>
    </recommendedName>
    <alternativeName>
        <fullName evidence="1">Heme B farnesyltransferase</fullName>
    </alternativeName>
    <alternativeName>
        <fullName evidence="1">Heme O synthase</fullName>
    </alternativeName>
</protein>
<organism>
    <name type="scientific">Burkholderia orbicola (strain AU 1054)</name>
    <dbReference type="NCBI Taxonomy" id="331271"/>
    <lineage>
        <taxon>Bacteria</taxon>
        <taxon>Pseudomonadati</taxon>
        <taxon>Pseudomonadota</taxon>
        <taxon>Betaproteobacteria</taxon>
        <taxon>Burkholderiales</taxon>
        <taxon>Burkholderiaceae</taxon>
        <taxon>Burkholderia</taxon>
        <taxon>Burkholderia cepacia complex</taxon>
        <taxon>Burkholderia orbicola</taxon>
    </lineage>
</organism>